<reference key="1">
    <citation type="journal article" date="2002" name="Nature">
        <title>The genome sequence of Schizosaccharomyces pombe.</title>
        <authorList>
            <person name="Wood V."/>
            <person name="Gwilliam R."/>
            <person name="Rajandream M.A."/>
            <person name="Lyne M.H."/>
            <person name="Lyne R."/>
            <person name="Stewart A."/>
            <person name="Sgouros J.G."/>
            <person name="Peat N."/>
            <person name="Hayles J."/>
            <person name="Baker S.G."/>
            <person name="Basham D."/>
            <person name="Bowman S."/>
            <person name="Brooks K."/>
            <person name="Brown D."/>
            <person name="Brown S."/>
            <person name="Chillingworth T."/>
            <person name="Churcher C.M."/>
            <person name="Collins M."/>
            <person name="Connor R."/>
            <person name="Cronin A."/>
            <person name="Davis P."/>
            <person name="Feltwell T."/>
            <person name="Fraser A."/>
            <person name="Gentles S."/>
            <person name="Goble A."/>
            <person name="Hamlin N."/>
            <person name="Harris D.E."/>
            <person name="Hidalgo J."/>
            <person name="Hodgson G."/>
            <person name="Holroyd S."/>
            <person name="Hornsby T."/>
            <person name="Howarth S."/>
            <person name="Huckle E.J."/>
            <person name="Hunt S."/>
            <person name="Jagels K."/>
            <person name="James K.D."/>
            <person name="Jones L."/>
            <person name="Jones M."/>
            <person name="Leather S."/>
            <person name="McDonald S."/>
            <person name="McLean J."/>
            <person name="Mooney P."/>
            <person name="Moule S."/>
            <person name="Mungall K.L."/>
            <person name="Murphy L.D."/>
            <person name="Niblett D."/>
            <person name="Odell C."/>
            <person name="Oliver K."/>
            <person name="O'Neil S."/>
            <person name="Pearson D."/>
            <person name="Quail M.A."/>
            <person name="Rabbinowitsch E."/>
            <person name="Rutherford K.M."/>
            <person name="Rutter S."/>
            <person name="Saunders D."/>
            <person name="Seeger K."/>
            <person name="Sharp S."/>
            <person name="Skelton J."/>
            <person name="Simmonds M.N."/>
            <person name="Squares R."/>
            <person name="Squares S."/>
            <person name="Stevens K."/>
            <person name="Taylor K."/>
            <person name="Taylor R.G."/>
            <person name="Tivey A."/>
            <person name="Walsh S.V."/>
            <person name="Warren T."/>
            <person name="Whitehead S."/>
            <person name="Woodward J.R."/>
            <person name="Volckaert G."/>
            <person name="Aert R."/>
            <person name="Robben J."/>
            <person name="Grymonprez B."/>
            <person name="Weltjens I."/>
            <person name="Vanstreels E."/>
            <person name="Rieger M."/>
            <person name="Schaefer M."/>
            <person name="Mueller-Auer S."/>
            <person name="Gabel C."/>
            <person name="Fuchs M."/>
            <person name="Duesterhoeft A."/>
            <person name="Fritzc C."/>
            <person name="Holzer E."/>
            <person name="Moestl D."/>
            <person name="Hilbert H."/>
            <person name="Borzym K."/>
            <person name="Langer I."/>
            <person name="Beck A."/>
            <person name="Lehrach H."/>
            <person name="Reinhardt R."/>
            <person name="Pohl T.M."/>
            <person name="Eger P."/>
            <person name="Zimmermann W."/>
            <person name="Wedler H."/>
            <person name="Wambutt R."/>
            <person name="Purnelle B."/>
            <person name="Goffeau A."/>
            <person name="Cadieu E."/>
            <person name="Dreano S."/>
            <person name="Gloux S."/>
            <person name="Lelaure V."/>
            <person name="Mottier S."/>
            <person name="Galibert F."/>
            <person name="Aves S.J."/>
            <person name="Xiang Z."/>
            <person name="Hunt C."/>
            <person name="Moore K."/>
            <person name="Hurst S.M."/>
            <person name="Lucas M."/>
            <person name="Rochet M."/>
            <person name="Gaillardin C."/>
            <person name="Tallada V.A."/>
            <person name="Garzon A."/>
            <person name="Thode G."/>
            <person name="Daga R.R."/>
            <person name="Cruzado L."/>
            <person name="Jimenez J."/>
            <person name="Sanchez M."/>
            <person name="del Rey F."/>
            <person name="Benito J."/>
            <person name="Dominguez A."/>
            <person name="Revuelta J.L."/>
            <person name="Moreno S."/>
            <person name="Armstrong J."/>
            <person name="Forsburg S.L."/>
            <person name="Cerutti L."/>
            <person name="Lowe T."/>
            <person name="McCombie W.R."/>
            <person name="Paulsen I."/>
            <person name="Potashkin J."/>
            <person name="Shpakovski G.V."/>
            <person name="Ussery D."/>
            <person name="Barrell B.G."/>
            <person name="Nurse P."/>
        </authorList>
    </citation>
    <scope>NUCLEOTIDE SEQUENCE [LARGE SCALE GENOMIC DNA]</scope>
    <source>
        <strain>972 / ATCC 24843</strain>
    </source>
</reference>
<reference key="2">
    <citation type="journal article" date="2008" name="J. Proteome Res.">
        <title>Phosphoproteome analysis of fission yeast.</title>
        <authorList>
            <person name="Wilson-Grady J.T."/>
            <person name="Villen J."/>
            <person name="Gygi S.P."/>
        </authorList>
    </citation>
    <scope>PHOSPHORYLATION [LARGE SCALE ANALYSIS] AT SER-222; SER-225 AND SER-476</scope>
    <scope>IDENTIFICATION BY MASS SPECTROMETRY</scope>
</reference>
<organism>
    <name type="scientific">Schizosaccharomyces pombe (strain 972 / ATCC 24843)</name>
    <name type="common">Fission yeast</name>
    <dbReference type="NCBI Taxonomy" id="284812"/>
    <lineage>
        <taxon>Eukaryota</taxon>
        <taxon>Fungi</taxon>
        <taxon>Dikarya</taxon>
        <taxon>Ascomycota</taxon>
        <taxon>Taphrinomycotina</taxon>
        <taxon>Schizosaccharomycetes</taxon>
        <taxon>Schizosaccharomycetales</taxon>
        <taxon>Schizosaccharomycetaceae</taxon>
        <taxon>Schizosaccharomyces</taxon>
    </lineage>
</organism>
<sequence>MPRKKSAAKKAREALVQKKVINSNVPTDKKSIDQLQENVTSKSHLLEESSSEDEEINSFQINEEYAKRFEHNKKREELQKLEAKYGEQMANGVDGEGSDESSSEEEEDSDGELVTPEVDAAILRMIVKIRNKDPDLYDSQQKYFDEVEKDVQGSLKSKDGFRSVTLKDYHRQKLLSGEILDAEEDEPMPNDANPTHVEEQERLRKETIAAFHDVNGNKDAVSNESDEDGDFLVKKEKTKKQLEEEEHGYERFLLESAQSKEARKVLEDLSSSYVKQRPSVLVNTEDDENGIKPSDEDFLLKYMMNRGWRTSNTKQPSYEEIIDEVDAENRFDEDAEEFENKFNFRFEEEAGSQIVSHPRNVADSLRRKDDSRKRARDRKKERLEEASQKRLEEVNRLKNLKRKELEEKLNQVIEIAGSKNIDVSKLDLDEDFDPEKWESKMSEIFNENYYEEDSAKKPEFGDDIDIDDIAQVDNGSEDLGSIENKTVEDTGNREKSKKSLRKDIREKKRKIDEYVEEKYGVPEAVIVKNSKFRYQQVAPETFGLDILDILNASDADLNNYVGLKKMTPYRTPEEIARDKKKYGKKKRLREWKKQVFGK</sequence>
<protein>
    <recommendedName>
        <fullName>Protein kri1</fullName>
    </recommendedName>
</protein>
<evidence type="ECO:0000250" key="1"/>
<evidence type="ECO:0000256" key="2">
    <source>
        <dbReference type="SAM" id="MobiDB-lite"/>
    </source>
</evidence>
<evidence type="ECO:0000269" key="3">
    <source>
    </source>
</evidence>
<evidence type="ECO:0000305" key="4"/>
<accession>Q09799</accession>
<keyword id="KW-0539">Nucleus</keyword>
<keyword id="KW-0597">Phosphoprotein</keyword>
<keyword id="KW-1185">Reference proteome</keyword>
<keyword id="KW-0690">Ribosome biogenesis</keyword>
<keyword id="KW-0698">rRNA processing</keyword>
<name>KRI1_SCHPO</name>
<proteinExistence type="evidence at protein level"/>
<feature type="chain" id="PRO_0000116407" description="Protein kri1">
    <location>
        <begin position="1"/>
        <end position="598"/>
    </location>
</feature>
<feature type="region of interest" description="Disordered" evidence="2">
    <location>
        <begin position="1"/>
        <end position="36"/>
    </location>
</feature>
<feature type="region of interest" description="Disordered" evidence="2">
    <location>
        <begin position="83"/>
        <end position="117"/>
    </location>
</feature>
<feature type="region of interest" description="Disordered" evidence="2">
    <location>
        <begin position="177"/>
        <end position="200"/>
    </location>
</feature>
<feature type="region of interest" description="Disordered" evidence="2">
    <location>
        <begin position="353"/>
        <end position="384"/>
    </location>
</feature>
<feature type="compositionally biased region" description="Acidic residues" evidence="2">
    <location>
        <begin position="96"/>
        <end position="111"/>
    </location>
</feature>
<feature type="compositionally biased region" description="Basic and acidic residues" evidence="2">
    <location>
        <begin position="364"/>
        <end position="384"/>
    </location>
</feature>
<feature type="modified residue" description="Phosphoserine" evidence="3">
    <location>
        <position position="222"/>
    </location>
</feature>
<feature type="modified residue" description="Phosphoserine" evidence="3">
    <location>
        <position position="225"/>
    </location>
</feature>
<feature type="modified residue" description="Phosphoserine" evidence="3">
    <location>
        <position position="476"/>
    </location>
</feature>
<dbReference type="EMBL" id="CU329670">
    <property type="protein sequence ID" value="CAA91129.1"/>
    <property type="molecule type" value="Genomic_DNA"/>
</dbReference>
<dbReference type="PIR" id="T11615">
    <property type="entry name" value="T11615"/>
</dbReference>
<dbReference type="RefSeq" id="NP_593054.1">
    <property type="nucleotide sequence ID" value="NM_001018452.2"/>
</dbReference>
<dbReference type="SMR" id="Q09799"/>
<dbReference type="BioGRID" id="278150">
    <property type="interactions" value="9"/>
</dbReference>
<dbReference type="FunCoup" id="Q09799">
    <property type="interactions" value="290"/>
</dbReference>
<dbReference type="STRING" id="284812.Q09799"/>
<dbReference type="iPTMnet" id="Q09799"/>
<dbReference type="PaxDb" id="4896-SPAC22G7.05.1"/>
<dbReference type="EnsemblFungi" id="SPAC22G7.05.1">
    <property type="protein sequence ID" value="SPAC22G7.05.1:pep"/>
    <property type="gene ID" value="SPAC22G7.05"/>
</dbReference>
<dbReference type="GeneID" id="2541654"/>
<dbReference type="KEGG" id="spo:2541654"/>
<dbReference type="PomBase" id="SPAC22G7.05">
    <property type="gene designation" value="kri1"/>
</dbReference>
<dbReference type="VEuPathDB" id="FungiDB:SPAC22G7.05"/>
<dbReference type="eggNOG" id="KOG2409">
    <property type="taxonomic scope" value="Eukaryota"/>
</dbReference>
<dbReference type="HOGENOM" id="CLU_009647_2_0_1"/>
<dbReference type="InParanoid" id="Q09799"/>
<dbReference type="OMA" id="WDNYDPR"/>
<dbReference type="PhylomeDB" id="Q09799"/>
<dbReference type="PRO" id="PR:Q09799"/>
<dbReference type="Proteomes" id="UP000002485">
    <property type="component" value="Chromosome I"/>
</dbReference>
<dbReference type="GO" id="GO:0030686">
    <property type="term" value="C:90S preribosome"/>
    <property type="evidence" value="ECO:0000318"/>
    <property type="project" value="GO_Central"/>
</dbReference>
<dbReference type="GO" id="GO:0005730">
    <property type="term" value="C:nucleolus"/>
    <property type="evidence" value="ECO:0000318"/>
    <property type="project" value="GO_Central"/>
</dbReference>
<dbReference type="GO" id="GO:0005634">
    <property type="term" value="C:nucleus"/>
    <property type="evidence" value="ECO:0007005"/>
    <property type="project" value="PomBase"/>
</dbReference>
<dbReference type="GO" id="GO:0000447">
    <property type="term" value="P:endonucleolytic cleavage in ITS1 to separate SSU-rRNA from 5.8S rRNA and LSU-rRNA from tricistronic rRNA transcript (SSU-rRNA, 5.8S rRNA, LSU-rRNA)"/>
    <property type="evidence" value="ECO:0000318"/>
    <property type="project" value="GO_Central"/>
</dbReference>
<dbReference type="InterPro" id="IPR018034">
    <property type="entry name" value="Kri1"/>
</dbReference>
<dbReference type="InterPro" id="IPR024626">
    <property type="entry name" value="Kri1-like_C"/>
</dbReference>
<dbReference type="PANTHER" id="PTHR14490:SF5">
    <property type="entry name" value="PROTEIN KRI1 HOMOLOG"/>
    <property type="match status" value="1"/>
</dbReference>
<dbReference type="PANTHER" id="PTHR14490">
    <property type="entry name" value="ZINC FINGER, ZZ TYPE"/>
    <property type="match status" value="1"/>
</dbReference>
<dbReference type="Pfam" id="PF05178">
    <property type="entry name" value="Kri1"/>
    <property type="match status" value="1"/>
</dbReference>
<dbReference type="Pfam" id="PF12936">
    <property type="entry name" value="Kri1_C"/>
    <property type="match status" value="1"/>
</dbReference>
<comment type="function">
    <text evidence="1">Required for 40S ribosome biogenesis. Involved in nucleolar processing of pre-18S ribosomal RNA (By similarity).</text>
</comment>
<comment type="subcellular location">
    <subcellularLocation>
        <location evidence="1">Nucleus</location>
        <location evidence="1">Nucleolus</location>
    </subcellularLocation>
</comment>
<comment type="similarity">
    <text evidence="4">Belongs to the KRI1 family.</text>
</comment>
<gene>
    <name type="primary">kri1</name>
    <name type="ORF">SPAC22G7.05</name>
</gene>